<organism>
    <name type="scientific">Staphylococcus aureus (strain MSSA476)</name>
    <dbReference type="NCBI Taxonomy" id="282459"/>
    <lineage>
        <taxon>Bacteria</taxon>
        <taxon>Bacillati</taxon>
        <taxon>Bacillota</taxon>
        <taxon>Bacilli</taxon>
        <taxon>Bacillales</taxon>
        <taxon>Staphylococcaceae</taxon>
        <taxon>Staphylococcus</taxon>
    </lineage>
</organism>
<gene>
    <name evidence="1" type="primary">mtlD</name>
    <name type="ordered locus">SAS2060</name>
</gene>
<protein>
    <recommendedName>
        <fullName evidence="1">Mannitol-1-phosphate 5-dehydrogenase</fullName>
        <ecNumber evidence="1">1.1.1.17</ecNumber>
    </recommendedName>
</protein>
<proteinExistence type="inferred from homology"/>
<evidence type="ECO:0000255" key="1">
    <source>
        <dbReference type="HAMAP-Rule" id="MF_00196"/>
    </source>
</evidence>
<dbReference type="EC" id="1.1.1.17" evidence="1"/>
<dbReference type="EMBL" id="BX571857">
    <property type="protein sequence ID" value="CAG43869.1"/>
    <property type="molecule type" value="Genomic_DNA"/>
</dbReference>
<dbReference type="RefSeq" id="WP_000648723.1">
    <property type="nucleotide sequence ID" value="NC_002953.3"/>
</dbReference>
<dbReference type="SMR" id="Q6G7F3"/>
<dbReference type="KEGG" id="sas:SAS2060"/>
<dbReference type="HOGENOM" id="CLU_036089_2_0_9"/>
<dbReference type="GO" id="GO:0005829">
    <property type="term" value="C:cytosol"/>
    <property type="evidence" value="ECO:0007669"/>
    <property type="project" value="TreeGrafter"/>
</dbReference>
<dbReference type="GO" id="GO:0008926">
    <property type="term" value="F:mannitol-1-phosphate 5-dehydrogenase activity"/>
    <property type="evidence" value="ECO:0007669"/>
    <property type="project" value="UniProtKB-UniRule"/>
</dbReference>
<dbReference type="GO" id="GO:0019592">
    <property type="term" value="P:mannitol catabolic process"/>
    <property type="evidence" value="ECO:0007669"/>
    <property type="project" value="TreeGrafter"/>
</dbReference>
<dbReference type="FunFam" id="3.40.50.720:FF:000316">
    <property type="entry name" value="Mannitol-1-phosphate 5-dehydrogenase"/>
    <property type="match status" value="1"/>
</dbReference>
<dbReference type="Gene3D" id="1.10.1040.10">
    <property type="entry name" value="N-(1-d-carboxylethyl)-l-norvaline Dehydrogenase, domain 2"/>
    <property type="match status" value="1"/>
</dbReference>
<dbReference type="Gene3D" id="3.40.50.720">
    <property type="entry name" value="NAD(P)-binding Rossmann-like Domain"/>
    <property type="match status" value="1"/>
</dbReference>
<dbReference type="HAMAP" id="MF_00196">
    <property type="entry name" value="Mannitol_dehydrog"/>
    <property type="match status" value="1"/>
</dbReference>
<dbReference type="InterPro" id="IPR008927">
    <property type="entry name" value="6-PGluconate_DH-like_C_sf"/>
</dbReference>
<dbReference type="InterPro" id="IPR013328">
    <property type="entry name" value="6PGD_dom2"/>
</dbReference>
<dbReference type="InterPro" id="IPR023028">
    <property type="entry name" value="Mannitol_1_phos_5_DH"/>
</dbReference>
<dbReference type="InterPro" id="IPR000669">
    <property type="entry name" value="Mannitol_DH"/>
</dbReference>
<dbReference type="InterPro" id="IPR013118">
    <property type="entry name" value="Mannitol_DH_C"/>
</dbReference>
<dbReference type="InterPro" id="IPR023027">
    <property type="entry name" value="Mannitol_DH_CS"/>
</dbReference>
<dbReference type="InterPro" id="IPR013131">
    <property type="entry name" value="Mannitol_DH_N"/>
</dbReference>
<dbReference type="InterPro" id="IPR036291">
    <property type="entry name" value="NAD(P)-bd_dom_sf"/>
</dbReference>
<dbReference type="NCBIfam" id="NF002645">
    <property type="entry name" value="PRK02318.1-1"/>
    <property type="match status" value="1"/>
</dbReference>
<dbReference type="NCBIfam" id="NF002652">
    <property type="entry name" value="PRK02318.2-5"/>
    <property type="match status" value="1"/>
</dbReference>
<dbReference type="PANTHER" id="PTHR30524:SF0">
    <property type="entry name" value="ALTRONATE OXIDOREDUCTASE-RELATED"/>
    <property type="match status" value="1"/>
</dbReference>
<dbReference type="PANTHER" id="PTHR30524">
    <property type="entry name" value="MANNITOL-1-PHOSPHATE 5-DEHYDROGENASE"/>
    <property type="match status" value="1"/>
</dbReference>
<dbReference type="Pfam" id="PF01232">
    <property type="entry name" value="Mannitol_dh"/>
    <property type="match status" value="1"/>
</dbReference>
<dbReference type="Pfam" id="PF08125">
    <property type="entry name" value="Mannitol_dh_C"/>
    <property type="match status" value="1"/>
</dbReference>
<dbReference type="PRINTS" id="PR00084">
    <property type="entry name" value="MTLDHDRGNASE"/>
</dbReference>
<dbReference type="SUPFAM" id="SSF48179">
    <property type="entry name" value="6-phosphogluconate dehydrogenase C-terminal domain-like"/>
    <property type="match status" value="1"/>
</dbReference>
<dbReference type="SUPFAM" id="SSF51735">
    <property type="entry name" value="NAD(P)-binding Rossmann-fold domains"/>
    <property type="match status" value="1"/>
</dbReference>
<dbReference type="PROSITE" id="PS00974">
    <property type="entry name" value="MANNITOL_DHGENASE"/>
    <property type="match status" value="1"/>
</dbReference>
<accession>Q6G7F3</accession>
<reference key="1">
    <citation type="journal article" date="2004" name="Proc. Natl. Acad. Sci. U.S.A.">
        <title>Complete genomes of two clinical Staphylococcus aureus strains: evidence for the rapid evolution of virulence and drug resistance.</title>
        <authorList>
            <person name="Holden M.T.G."/>
            <person name="Feil E.J."/>
            <person name="Lindsay J.A."/>
            <person name="Peacock S.J."/>
            <person name="Day N.P.J."/>
            <person name="Enright M.C."/>
            <person name="Foster T.J."/>
            <person name="Moore C.E."/>
            <person name="Hurst L."/>
            <person name="Atkin R."/>
            <person name="Barron A."/>
            <person name="Bason N."/>
            <person name="Bentley S.D."/>
            <person name="Chillingworth C."/>
            <person name="Chillingworth T."/>
            <person name="Churcher C."/>
            <person name="Clark L."/>
            <person name="Corton C."/>
            <person name="Cronin A."/>
            <person name="Doggett J."/>
            <person name="Dowd L."/>
            <person name="Feltwell T."/>
            <person name="Hance Z."/>
            <person name="Harris B."/>
            <person name="Hauser H."/>
            <person name="Holroyd S."/>
            <person name="Jagels K."/>
            <person name="James K.D."/>
            <person name="Lennard N."/>
            <person name="Line A."/>
            <person name="Mayes R."/>
            <person name="Moule S."/>
            <person name="Mungall K."/>
            <person name="Ormond D."/>
            <person name="Quail M.A."/>
            <person name="Rabbinowitsch E."/>
            <person name="Rutherford K.M."/>
            <person name="Sanders M."/>
            <person name="Sharp S."/>
            <person name="Simmonds M."/>
            <person name="Stevens K."/>
            <person name="Whitehead S."/>
            <person name="Barrell B.G."/>
            <person name="Spratt B.G."/>
            <person name="Parkhill J."/>
        </authorList>
    </citation>
    <scope>NUCLEOTIDE SEQUENCE [LARGE SCALE GENOMIC DNA]</scope>
    <source>
        <strain>MSSA476</strain>
    </source>
</reference>
<keyword id="KW-0520">NAD</keyword>
<keyword id="KW-0560">Oxidoreductase</keyword>
<name>MTLD_STAAS</name>
<comment type="catalytic activity">
    <reaction evidence="1">
        <text>D-mannitol 1-phosphate + NAD(+) = beta-D-fructose 6-phosphate + NADH + H(+)</text>
        <dbReference type="Rhea" id="RHEA:19661"/>
        <dbReference type="ChEBI" id="CHEBI:15378"/>
        <dbReference type="ChEBI" id="CHEBI:57540"/>
        <dbReference type="ChEBI" id="CHEBI:57634"/>
        <dbReference type="ChEBI" id="CHEBI:57945"/>
        <dbReference type="ChEBI" id="CHEBI:61381"/>
        <dbReference type="EC" id="1.1.1.17"/>
    </reaction>
</comment>
<comment type="similarity">
    <text evidence="1">Belongs to the mannitol dehydrogenase family.</text>
</comment>
<feature type="chain" id="PRO_0000170723" description="Mannitol-1-phosphate 5-dehydrogenase">
    <location>
        <begin position="1"/>
        <end position="368"/>
    </location>
</feature>
<feature type="binding site" evidence="1">
    <location>
        <begin position="3"/>
        <end position="14"/>
    </location>
    <ligand>
        <name>NAD(+)</name>
        <dbReference type="ChEBI" id="CHEBI:57540"/>
    </ligand>
</feature>
<sequence length="368" mass="40936">MKAVHFGAGNIGRGFIGYILADNNVKVTFADVNEEIINALAHDHQYDVILADESKTTTRVNNVDAINSMQPSEALKQAILEADIITTAVGVNILPIIAKSFAPFLKEKTNHVNIVACENAIMATDTLKKAVLDITGPLGNNIHFANSAVDRIVPLQKNENILDVMVEPFYEWVVEKDAWYGPELNHIKYVDDLTPYIERKLLTVNTGHAYLAYAGKFAGKATVLDAVKDSSIEAGLRRVLAETSQYITNEFDFTEAEQAGYVEKIIDRFNNSYLSDEVTRVGRGTLRKIGPKDRIIKPLTYLYNKDLERTGLLNTAALLLKYDDTADQETVEKNNYIKEHGLKAFLSEYAKVDDGLADEIIEAYNSLS</sequence>